<name>FOLD_STRPF</name>
<keyword id="KW-0028">Amino-acid biosynthesis</keyword>
<keyword id="KW-0368">Histidine biosynthesis</keyword>
<keyword id="KW-0378">Hydrolase</keyword>
<keyword id="KW-0486">Methionine biosynthesis</keyword>
<keyword id="KW-0511">Multifunctional enzyme</keyword>
<keyword id="KW-0521">NADP</keyword>
<keyword id="KW-0554">One-carbon metabolism</keyword>
<keyword id="KW-0560">Oxidoreductase</keyword>
<keyword id="KW-0658">Purine biosynthesis</keyword>
<organism>
    <name type="scientific">Streptococcus pyogenes serotype M4 (strain MGAS10750)</name>
    <dbReference type="NCBI Taxonomy" id="370554"/>
    <lineage>
        <taxon>Bacteria</taxon>
        <taxon>Bacillati</taxon>
        <taxon>Bacillota</taxon>
        <taxon>Bacilli</taxon>
        <taxon>Lactobacillales</taxon>
        <taxon>Streptococcaceae</taxon>
        <taxon>Streptococcus</taxon>
    </lineage>
</organism>
<accession>Q1J5U5</accession>
<feature type="chain" id="PRO_0000268521" description="Bifunctional protein FolD">
    <location>
        <begin position="1"/>
        <end position="284"/>
    </location>
</feature>
<feature type="binding site" evidence="1">
    <location>
        <begin position="165"/>
        <end position="167"/>
    </location>
    <ligand>
        <name>NADP(+)</name>
        <dbReference type="ChEBI" id="CHEBI:58349"/>
    </ligand>
</feature>
<feature type="binding site" evidence="1">
    <location>
        <position position="190"/>
    </location>
    <ligand>
        <name>NADP(+)</name>
        <dbReference type="ChEBI" id="CHEBI:58349"/>
    </ligand>
</feature>
<dbReference type="EC" id="1.5.1.5" evidence="1"/>
<dbReference type="EC" id="3.5.4.9" evidence="1"/>
<dbReference type="EMBL" id="CP000262">
    <property type="protein sequence ID" value="ABF38291.1"/>
    <property type="status" value="ALT_INIT"/>
    <property type="molecule type" value="Genomic_DNA"/>
</dbReference>
<dbReference type="SMR" id="Q1J5U5"/>
<dbReference type="KEGG" id="spi:MGAS10750_Spy1341"/>
<dbReference type="HOGENOM" id="CLU_034045_2_1_9"/>
<dbReference type="UniPathway" id="UPA00193"/>
<dbReference type="Proteomes" id="UP000002434">
    <property type="component" value="Chromosome"/>
</dbReference>
<dbReference type="GO" id="GO:0005829">
    <property type="term" value="C:cytosol"/>
    <property type="evidence" value="ECO:0007669"/>
    <property type="project" value="TreeGrafter"/>
</dbReference>
<dbReference type="GO" id="GO:0004477">
    <property type="term" value="F:methenyltetrahydrofolate cyclohydrolase activity"/>
    <property type="evidence" value="ECO:0007669"/>
    <property type="project" value="UniProtKB-UniRule"/>
</dbReference>
<dbReference type="GO" id="GO:0004488">
    <property type="term" value="F:methylenetetrahydrofolate dehydrogenase (NADP+) activity"/>
    <property type="evidence" value="ECO:0007669"/>
    <property type="project" value="UniProtKB-UniRule"/>
</dbReference>
<dbReference type="GO" id="GO:0000105">
    <property type="term" value="P:L-histidine biosynthetic process"/>
    <property type="evidence" value="ECO:0007669"/>
    <property type="project" value="UniProtKB-KW"/>
</dbReference>
<dbReference type="GO" id="GO:0009086">
    <property type="term" value="P:methionine biosynthetic process"/>
    <property type="evidence" value="ECO:0007669"/>
    <property type="project" value="UniProtKB-KW"/>
</dbReference>
<dbReference type="GO" id="GO:0006164">
    <property type="term" value="P:purine nucleotide biosynthetic process"/>
    <property type="evidence" value="ECO:0007669"/>
    <property type="project" value="UniProtKB-KW"/>
</dbReference>
<dbReference type="GO" id="GO:0035999">
    <property type="term" value="P:tetrahydrofolate interconversion"/>
    <property type="evidence" value="ECO:0007669"/>
    <property type="project" value="UniProtKB-UniRule"/>
</dbReference>
<dbReference type="CDD" id="cd01080">
    <property type="entry name" value="NAD_bind_m-THF_DH_Cyclohyd"/>
    <property type="match status" value="1"/>
</dbReference>
<dbReference type="FunFam" id="3.40.50.10860:FF:000001">
    <property type="entry name" value="Bifunctional protein FolD"/>
    <property type="match status" value="1"/>
</dbReference>
<dbReference type="FunFam" id="3.40.50.720:FF:000094">
    <property type="entry name" value="Bifunctional protein FolD"/>
    <property type="match status" value="1"/>
</dbReference>
<dbReference type="Gene3D" id="3.40.50.10860">
    <property type="entry name" value="Leucine Dehydrogenase, chain A, domain 1"/>
    <property type="match status" value="1"/>
</dbReference>
<dbReference type="Gene3D" id="3.40.50.720">
    <property type="entry name" value="NAD(P)-binding Rossmann-like Domain"/>
    <property type="match status" value="1"/>
</dbReference>
<dbReference type="HAMAP" id="MF_01576">
    <property type="entry name" value="THF_DHG_CYH"/>
    <property type="match status" value="1"/>
</dbReference>
<dbReference type="InterPro" id="IPR046346">
    <property type="entry name" value="Aminoacid_DH-like_N_sf"/>
</dbReference>
<dbReference type="InterPro" id="IPR036291">
    <property type="entry name" value="NAD(P)-bd_dom_sf"/>
</dbReference>
<dbReference type="InterPro" id="IPR000672">
    <property type="entry name" value="THF_DH/CycHdrlase"/>
</dbReference>
<dbReference type="InterPro" id="IPR020630">
    <property type="entry name" value="THF_DH/CycHdrlase_cat_dom"/>
</dbReference>
<dbReference type="InterPro" id="IPR020867">
    <property type="entry name" value="THF_DH/CycHdrlase_CS"/>
</dbReference>
<dbReference type="InterPro" id="IPR020631">
    <property type="entry name" value="THF_DH/CycHdrlase_NAD-bd_dom"/>
</dbReference>
<dbReference type="NCBIfam" id="NF008058">
    <property type="entry name" value="PRK10792.1"/>
    <property type="match status" value="1"/>
</dbReference>
<dbReference type="NCBIfam" id="NF010776">
    <property type="entry name" value="PRK14179.1"/>
    <property type="match status" value="1"/>
</dbReference>
<dbReference type="NCBIfam" id="NF010783">
    <property type="entry name" value="PRK14186.1"/>
    <property type="match status" value="1"/>
</dbReference>
<dbReference type="NCBIfam" id="NF010785">
    <property type="entry name" value="PRK14188.1"/>
    <property type="match status" value="1"/>
</dbReference>
<dbReference type="PANTHER" id="PTHR48099:SF5">
    <property type="entry name" value="C-1-TETRAHYDROFOLATE SYNTHASE, CYTOPLASMIC"/>
    <property type="match status" value="1"/>
</dbReference>
<dbReference type="PANTHER" id="PTHR48099">
    <property type="entry name" value="C-1-TETRAHYDROFOLATE SYNTHASE, CYTOPLASMIC-RELATED"/>
    <property type="match status" value="1"/>
</dbReference>
<dbReference type="Pfam" id="PF00763">
    <property type="entry name" value="THF_DHG_CYH"/>
    <property type="match status" value="1"/>
</dbReference>
<dbReference type="Pfam" id="PF02882">
    <property type="entry name" value="THF_DHG_CYH_C"/>
    <property type="match status" value="1"/>
</dbReference>
<dbReference type="PRINTS" id="PR00085">
    <property type="entry name" value="THFDHDRGNASE"/>
</dbReference>
<dbReference type="SUPFAM" id="SSF53223">
    <property type="entry name" value="Aminoacid dehydrogenase-like, N-terminal domain"/>
    <property type="match status" value="1"/>
</dbReference>
<dbReference type="SUPFAM" id="SSF51735">
    <property type="entry name" value="NAD(P)-binding Rossmann-fold domains"/>
    <property type="match status" value="1"/>
</dbReference>
<dbReference type="PROSITE" id="PS00766">
    <property type="entry name" value="THF_DHG_CYH_1"/>
    <property type="match status" value="1"/>
</dbReference>
<dbReference type="PROSITE" id="PS00767">
    <property type="entry name" value="THF_DHG_CYH_2"/>
    <property type="match status" value="1"/>
</dbReference>
<proteinExistence type="inferred from homology"/>
<gene>
    <name evidence="1" type="primary">folD</name>
    <name type="ordered locus">MGAS10750_Spy1341</name>
</gene>
<protein>
    <recommendedName>
        <fullName evidence="1">Bifunctional protein FolD</fullName>
    </recommendedName>
    <domain>
        <recommendedName>
            <fullName evidence="1">Methylenetetrahydrofolate dehydrogenase</fullName>
            <ecNumber evidence="1">1.5.1.5</ecNumber>
        </recommendedName>
    </domain>
    <domain>
        <recommendedName>
            <fullName evidence="1">Methenyltetrahydrofolate cyclohydrolase</fullName>
            <ecNumber evidence="1">3.5.4.9</ecNumber>
        </recommendedName>
    </domain>
</protein>
<evidence type="ECO:0000255" key="1">
    <source>
        <dbReference type="HAMAP-Rule" id="MF_01576"/>
    </source>
</evidence>
<evidence type="ECO:0000305" key="2"/>
<comment type="function">
    <text evidence="1">Catalyzes the oxidation of 5,10-methylenetetrahydrofolate to 5,10-methenyltetrahydrofolate and then the hydrolysis of 5,10-methenyltetrahydrofolate to 10-formyltetrahydrofolate.</text>
</comment>
<comment type="catalytic activity">
    <reaction evidence="1">
        <text>(6R)-5,10-methylene-5,6,7,8-tetrahydrofolate + NADP(+) = (6R)-5,10-methenyltetrahydrofolate + NADPH</text>
        <dbReference type="Rhea" id="RHEA:22812"/>
        <dbReference type="ChEBI" id="CHEBI:15636"/>
        <dbReference type="ChEBI" id="CHEBI:57455"/>
        <dbReference type="ChEBI" id="CHEBI:57783"/>
        <dbReference type="ChEBI" id="CHEBI:58349"/>
        <dbReference type="EC" id="1.5.1.5"/>
    </reaction>
</comment>
<comment type="catalytic activity">
    <reaction evidence="1">
        <text>(6R)-5,10-methenyltetrahydrofolate + H2O = (6R)-10-formyltetrahydrofolate + H(+)</text>
        <dbReference type="Rhea" id="RHEA:23700"/>
        <dbReference type="ChEBI" id="CHEBI:15377"/>
        <dbReference type="ChEBI" id="CHEBI:15378"/>
        <dbReference type="ChEBI" id="CHEBI:57455"/>
        <dbReference type="ChEBI" id="CHEBI:195366"/>
        <dbReference type="EC" id="3.5.4.9"/>
    </reaction>
</comment>
<comment type="pathway">
    <text evidence="1">One-carbon metabolism; tetrahydrofolate interconversion.</text>
</comment>
<comment type="subunit">
    <text evidence="1">Homodimer.</text>
</comment>
<comment type="similarity">
    <text evidence="1">Belongs to the tetrahydrofolate dehydrogenase/cyclohydrolase family.</text>
</comment>
<comment type="sequence caution" evidence="2">
    <conflict type="erroneous initiation">
        <sequence resource="EMBL-CDS" id="ABF38291"/>
    </conflict>
</comment>
<sequence>MTELIDGKALAQKMQQELAAKVNNLKQKKGIVPGLAVILVGDDPASQVYVRNKERAALTVGFKSETVRLSEFICQEELIAVIERYNADNTIHGILVQLPLPNHINDKKIILAIDPKKDVDGFHPMNTGHLWSGRPLMVPCTPSGIMELLREYNVNLEGKHAVIIGRSNIVGKPMAQLLLDKNATVTLTHSRTRQLEEVCRCADVLIVAIGQGHFITKQYIKEGAIVIDVGMNRDDNGKLIGDVAFDEVAEVAAKITPVPGGVGPMTIAMLLEQTYQSALRSTHK</sequence>
<reference key="1">
    <citation type="journal article" date="2006" name="Proc. Natl. Acad. Sci. U.S.A.">
        <title>Molecular genetic anatomy of inter- and intraserotype variation in the human bacterial pathogen group A Streptococcus.</title>
        <authorList>
            <person name="Beres S.B."/>
            <person name="Richter E.W."/>
            <person name="Nagiec M.J."/>
            <person name="Sumby P."/>
            <person name="Porcella S.F."/>
            <person name="DeLeo F.R."/>
            <person name="Musser J.M."/>
        </authorList>
    </citation>
    <scope>NUCLEOTIDE SEQUENCE [LARGE SCALE GENOMIC DNA]</scope>
    <source>
        <strain>MGAS10750</strain>
    </source>
</reference>